<evidence type="ECO:0000255" key="1">
    <source>
        <dbReference type="HAMAP-Rule" id="MF_00130"/>
    </source>
</evidence>
<gene>
    <name evidence="1" type="primary">recU</name>
    <name type="ordered locus">M28_Spy1395</name>
</gene>
<protein>
    <recommendedName>
        <fullName evidence="1">Holliday junction resolvase RecU</fullName>
        <ecNumber evidence="1">3.1.21.10</ecNumber>
    </recommendedName>
    <alternativeName>
        <fullName evidence="1">Recombination protein U homolog</fullName>
    </alternativeName>
</protein>
<feature type="chain" id="PRO_1000016753" description="Holliday junction resolvase RecU">
    <location>
        <begin position="1"/>
        <end position="202"/>
    </location>
</feature>
<feature type="binding site" evidence="1">
    <location>
        <position position="85"/>
    </location>
    <ligand>
        <name>Mg(2+)</name>
        <dbReference type="ChEBI" id="CHEBI:18420"/>
    </ligand>
</feature>
<feature type="binding site" evidence="1">
    <location>
        <position position="87"/>
    </location>
    <ligand>
        <name>Mg(2+)</name>
        <dbReference type="ChEBI" id="CHEBI:18420"/>
    </ligand>
</feature>
<feature type="binding site" evidence="1">
    <location>
        <position position="100"/>
    </location>
    <ligand>
        <name>Mg(2+)</name>
        <dbReference type="ChEBI" id="CHEBI:18420"/>
    </ligand>
</feature>
<feature type="binding site" evidence="1">
    <location>
        <position position="119"/>
    </location>
    <ligand>
        <name>Mg(2+)</name>
        <dbReference type="ChEBI" id="CHEBI:18420"/>
    </ligand>
</feature>
<feature type="site" description="Transition state stabilizer" evidence="1">
    <location>
        <position position="102"/>
    </location>
</feature>
<dbReference type="EC" id="3.1.21.10" evidence="1"/>
<dbReference type="EMBL" id="CP000056">
    <property type="protein sequence ID" value="AAX72505.1"/>
    <property type="molecule type" value="Genomic_DNA"/>
</dbReference>
<dbReference type="RefSeq" id="WP_002983622.1">
    <property type="nucleotide sequence ID" value="NC_007296.2"/>
</dbReference>
<dbReference type="SMR" id="Q48S05"/>
<dbReference type="GeneID" id="69900483"/>
<dbReference type="KEGG" id="spb:M28_Spy1395"/>
<dbReference type="HOGENOM" id="CLU_096340_0_0_9"/>
<dbReference type="GO" id="GO:0005737">
    <property type="term" value="C:cytoplasm"/>
    <property type="evidence" value="ECO:0007669"/>
    <property type="project" value="UniProtKB-SubCell"/>
</dbReference>
<dbReference type="GO" id="GO:0004519">
    <property type="term" value="F:endonuclease activity"/>
    <property type="evidence" value="ECO:0007669"/>
    <property type="project" value="UniProtKB-UniRule"/>
</dbReference>
<dbReference type="GO" id="GO:0000287">
    <property type="term" value="F:magnesium ion binding"/>
    <property type="evidence" value="ECO:0007669"/>
    <property type="project" value="UniProtKB-UniRule"/>
</dbReference>
<dbReference type="GO" id="GO:0003676">
    <property type="term" value="F:nucleic acid binding"/>
    <property type="evidence" value="ECO:0007669"/>
    <property type="project" value="InterPro"/>
</dbReference>
<dbReference type="GO" id="GO:0007059">
    <property type="term" value="P:chromosome segregation"/>
    <property type="evidence" value="ECO:0007669"/>
    <property type="project" value="UniProtKB-UniRule"/>
</dbReference>
<dbReference type="GO" id="GO:0006310">
    <property type="term" value="P:DNA recombination"/>
    <property type="evidence" value="ECO:0007669"/>
    <property type="project" value="UniProtKB-UniRule"/>
</dbReference>
<dbReference type="GO" id="GO:0006281">
    <property type="term" value="P:DNA repair"/>
    <property type="evidence" value="ECO:0007669"/>
    <property type="project" value="UniProtKB-UniRule"/>
</dbReference>
<dbReference type="CDD" id="cd22354">
    <property type="entry name" value="RecU-like"/>
    <property type="match status" value="1"/>
</dbReference>
<dbReference type="Gene3D" id="3.40.1350.10">
    <property type="match status" value="1"/>
</dbReference>
<dbReference type="HAMAP" id="MF_00130">
    <property type="entry name" value="RecU"/>
    <property type="match status" value="1"/>
</dbReference>
<dbReference type="InterPro" id="IPR004612">
    <property type="entry name" value="Resolv_RecU"/>
</dbReference>
<dbReference type="InterPro" id="IPR011335">
    <property type="entry name" value="Restrct_endonuc-II-like"/>
</dbReference>
<dbReference type="InterPro" id="IPR011856">
    <property type="entry name" value="tRNA_endonuc-like_dom_sf"/>
</dbReference>
<dbReference type="NCBIfam" id="NF002580">
    <property type="entry name" value="PRK02234.1-1"/>
    <property type="match status" value="1"/>
</dbReference>
<dbReference type="NCBIfam" id="NF002584">
    <property type="entry name" value="PRK02234.1-5"/>
    <property type="match status" value="1"/>
</dbReference>
<dbReference type="NCBIfam" id="TIGR00648">
    <property type="entry name" value="recU"/>
    <property type="match status" value="1"/>
</dbReference>
<dbReference type="Pfam" id="PF03838">
    <property type="entry name" value="RecU"/>
    <property type="match status" value="1"/>
</dbReference>
<dbReference type="PIRSF" id="PIRSF037785">
    <property type="entry name" value="RecU"/>
    <property type="match status" value="1"/>
</dbReference>
<dbReference type="SUPFAM" id="SSF52980">
    <property type="entry name" value="Restriction endonuclease-like"/>
    <property type="match status" value="1"/>
</dbReference>
<sequence length="202" mass="23357">MVNYPHNLIRQKVSSVQKQTKQNKVDFANRGMSFEAAINATNDYYLSRQIAVIHKKPTPVQIVKVDYPKRSRAKIVEAYFRQASTTDYCGVYKGHYVDFEAKETRQKTAMPMKNFHLHQIEHMACVLHQKGICFVLLHFSTLKETYYLPAQALISFYQIDNGSKSMPIDYIRKNGFKVAFGAFPQVPYLNIIEQNFLGGDYN</sequence>
<reference key="1">
    <citation type="journal article" date="2005" name="J. Infect. Dis.">
        <title>Genome sequence of a serotype M28 strain of group A Streptococcus: potential new insights into puerperal sepsis and bacterial disease specificity.</title>
        <authorList>
            <person name="Green N.M."/>
            <person name="Zhang S."/>
            <person name="Porcella S.F."/>
            <person name="Nagiec M.J."/>
            <person name="Barbian K.D."/>
            <person name="Beres S.B."/>
            <person name="Lefebvre R.B."/>
            <person name="Musser J.M."/>
        </authorList>
    </citation>
    <scope>NUCLEOTIDE SEQUENCE [LARGE SCALE GENOMIC DNA]</scope>
    <source>
        <strain>MGAS6180</strain>
    </source>
</reference>
<comment type="function">
    <text evidence="1">Endonuclease that resolves Holliday junction intermediates in genetic recombination. Cleaves mobile four-strand junctions by introducing symmetrical nicks in paired strands. Promotes annealing of linear ssDNA with homologous dsDNA. Required for DNA repair, homologous recombination and chromosome segregation.</text>
</comment>
<comment type="catalytic activity">
    <reaction evidence="1">
        <text>Endonucleolytic cleavage at a junction such as a reciprocal single-stranded crossover between two homologous DNA duplexes (Holliday junction).</text>
        <dbReference type="EC" id="3.1.21.10"/>
    </reaction>
</comment>
<comment type="cofactor">
    <cofactor evidence="1">
        <name>Mg(2+)</name>
        <dbReference type="ChEBI" id="CHEBI:18420"/>
    </cofactor>
    <text evidence="1">Binds 1 Mg(2+) ion per subunit.</text>
</comment>
<comment type="subcellular location">
    <subcellularLocation>
        <location evidence="1">Cytoplasm</location>
    </subcellularLocation>
</comment>
<comment type="similarity">
    <text evidence="1">Belongs to the RecU family.</text>
</comment>
<name>RECU_STRPM</name>
<keyword id="KW-0963">Cytoplasm</keyword>
<keyword id="KW-0227">DNA damage</keyword>
<keyword id="KW-0233">DNA recombination</keyword>
<keyword id="KW-0234">DNA repair</keyword>
<keyword id="KW-0255">Endonuclease</keyword>
<keyword id="KW-0378">Hydrolase</keyword>
<keyword id="KW-0460">Magnesium</keyword>
<keyword id="KW-0479">Metal-binding</keyword>
<keyword id="KW-0540">Nuclease</keyword>
<accession>Q48S05</accession>
<proteinExistence type="inferred from homology"/>
<organism>
    <name type="scientific">Streptococcus pyogenes serotype M28 (strain MGAS6180)</name>
    <dbReference type="NCBI Taxonomy" id="319701"/>
    <lineage>
        <taxon>Bacteria</taxon>
        <taxon>Bacillati</taxon>
        <taxon>Bacillota</taxon>
        <taxon>Bacilli</taxon>
        <taxon>Lactobacillales</taxon>
        <taxon>Streptococcaceae</taxon>
        <taxon>Streptococcus</taxon>
    </lineage>
</organism>